<comment type="function">
    <text evidence="1">Involved in the modulation of the specificity of the ClpAP-mediated ATP-dependent protein degradation.</text>
</comment>
<comment type="subunit">
    <text evidence="1">Binds to the N-terminal domain of the chaperone ClpA.</text>
</comment>
<comment type="similarity">
    <text evidence="1">Belongs to the ClpS family.</text>
</comment>
<keyword id="KW-1185">Reference proteome</keyword>
<reference key="1">
    <citation type="journal article" date="2005" name="J. Bacteriol.">
        <title>Complete genome sequence and analysis of the multiresistant nosocomial pathogen Corynebacterium jeikeium K411, a lipid-requiring bacterium of the human skin flora.</title>
        <authorList>
            <person name="Tauch A."/>
            <person name="Kaiser O."/>
            <person name="Hain T."/>
            <person name="Goesmann A."/>
            <person name="Weisshaar B."/>
            <person name="Albersmeier A."/>
            <person name="Bekel T."/>
            <person name="Bischoff N."/>
            <person name="Brune I."/>
            <person name="Chakraborty T."/>
            <person name="Kalinowski J."/>
            <person name="Meyer F."/>
            <person name="Rupp O."/>
            <person name="Schneiker S."/>
            <person name="Viehoever P."/>
            <person name="Puehler A."/>
        </authorList>
    </citation>
    <scope>NUCLEOTIDE SEQUENCE [LARGE SCALE GENOMIC DNA]</scope>
    <source>
        <strain>K411</strain>
    </source>
</reference>
<proteinExistence type="inferred from homology"/>
<feature type="chain" id="PRO_0000300702" description="ATP-dependent Clp protease adapter protein ClpS">
    <location>
        <begin position="1"/>
        <end position="101"/>
    </location>
</feature>
<sequence length="101" mass="11133">MTSPAAPAATPVADKLPETLTEPNLPWMCICWDDPVNLMSYVTYVFQTVLGYSRKRATELMMQVHTEGKAVVSSGERDKVEGDVKKLQTAGLWATMQRADG</sequence>
<organism>
    <name type="scientific">Corynebacterium jeikeium (strain K411)</name>
    <dbReference type="NCBI Taxonomy" id="306537"/>
    <lineage>
        <taxon>Bacteria</taxon>
        <taxon>Bacillati</taxon>
        <taxon>Actinomycetota</taxon>
        <taxon>Actinomycetes</taxon>
        <taxon>Mycobacteriales</taxon>
        <taxon>Corynebacteriaceae</taxon>
        <taxon>Corynebacterium</taxon>
    </lineage>
</organism>
<accession>Q4JX07</accession>
<gene>
    <name evidence="1" type="primary">clpS</name>
    <name type="ordered locus">jk0493</name>
</gene>
<dbReference type="EMBL" id="CR931997">
    <property type="protein sequence ID" value="CAI36650.1"/>
    <property type="molecule type" value="Genomic_DNA"/>
</dbReference>
<dbReference type="RefSeq" id="WP_011273166.1">
    <property type="nucleotide sequence ID" value="NC_007164.1"/>
</dbReference>
<dbReference type="SMR" id="Q4JX07"/>
<dbReference type="STRING" id="306537.jk0493"/>
<dbReference type="GeneID" id="92737992"/>
<dbReference type="KEGG" id="cjk:jk0493"/>
<dbReference type="eggNOG" id="COG2127">
    <property type="taxonomic scope" value="Bacteria"/>
</dbReference>
<dbReference type="HOGENOM" id="CLU_153743_1_0_11"/>
<dbReference type="OrthoDB" id="162238at2"/>
<dbReference type="Proteomes" id="UP000000545">
    <property type="component" value="Chromosome"/>
</dbReference>
<dbReference type="GO" id="GO:0030163">
    <property type="term" value="P:protein catabolic process"/>
    <property type="evidence" value="ECO:0007669"/>
    <property type="project" value="InterPro"/>
</dbReference>
<dbReference type="GO" id="GO:0006508">
    <property type="term" value="P:proteolysis"/>
    <property type="evidence" value="ECO:0007669"/>
    <property type="project" value="UniProtKB-UniRule"/>
</dbReference>
<dbReference type="Gene3D" id="3.30.1390.10">
    <property type="match status" value="1"/>
</dbReference>
<dbReference type="HAMAP" id="MF_00302">
    <property type="entry name" value="ClpS"/>
    <property type="match status" value="1"/>
</dbReference>
<dbReference type="InterPro" id="IPR022935">
    <property type="entry name" value="ClpS"/>
</dbReference>
<dbReference type="InterPro" id="IPR003769">
    <property type="entry name" value="ClpS_core"/>
</dbReference>
<dbReference type="InterPro" id="IPR014719">
    <property type="entry name" value="Ribosomal_bL12_C/ClpS-like"/>
</dbReference>
<dbReference type="NCBIfam" id="NF000668">
    <property type="entry name" value="PRK00033.1-1"/>
    <property type="match status" value="1"/>
</dbReference>
<dbReference type="Pfam" id="PF02617">
    <property type="entry name" value="ClpS"/>
    <property type="match status" value="1"/>
</dbReference>
<dbReference type="SUPFAM" id="SSF54736">
    <property type="entry name" value="ClpS-like"/>
    <property type="match status" value="1"/>
</dbReference>
<evidence type="ECO:0000255" key="1">
    <source>
        <dbReference type="HAMAP-Rule" id="MF_00302"/>
    </source>
</evidence>
<protein>
    <recommendedName>
        <fullName evidence="1">ATP-dependent Clp protease adapter protein ClpS</fullName>
    </recommendedName>
</protein>
<name>CLPS_CORJK</name>